<dbReference type="EMBL" id="CP000348">
    <property type="protein sequence ID" value="ABJ78617.1"/>
    <property type="molecule type" value="Genomic_DNA"/>
</dbReference>
<dbReference type="RefSeq" id="WP_002619721.1">
    <property type="nucleotide sequence ID" value="NC_008508.1"/>
</dbReference>
<dbReference type="SMR" id="Q052X8"/>
<dbReference type="GeneID" id="61173743"/>
<dbReference type="KEGG" id="lbl:LBL_1103"/>
<dbReference type="HOGENOM" id="CLU_132825_2_0_12"/>
<dbReference type="GO" id="GO:0005737">
    <property type="term" value="C:cytoplasm"/>
    <property type="evidence" value="ECO:0007669"/>
    <property type="project" value="UniProtKB-SubCell"/>
</dbReference>
<dbReference type="GO" id="GO:0005524">
    <property type="term" value="F:ATP binding"/>
    <property type="evidence" value="ECO:0007669"/>
    <property type="project" value="InterPro"/>
</dbReference>
<dbReference type="GO" id="GO:0046872">
    <property type="term" value="F:metal ion binding"/>
    <property type="evidence" value="ECO:0007669"/>
    <property type="project" value="TreeGrafter"/>
</dbReference>
<dbReference type="GO" id="GO:0044183">
    <property type="term" value="F:protein folding chaperone"/>
    <property type="evidence" value="ECO:0007669"/>
    <property type="project" value="InterPro"/>
</dbReference>
<dbReference type="GO" id="GO:0051087">
    <property type="term" value="F:protein-folding chaperone binding"/>
    <property type="evidence" value="ECO:0007669"/>
    <property type="project" value="TreeGrafter"/>
</dbReference>
<dbReference type="GO" id="GO:0051082">
    <property type="term" value="F:unfolded protein binding"/>
    <property type="evidence" value="ECO:0007669"/>
    <property type="project" value="TreeGrafter"/>
</dbReference>
<dbReference type="GO" id="GO:0051085">
    <property type="term" value="P:chaperone cofactor-dependent protein refolding"/>
    <property type="evidence" value="ECO:0007669"/>
    <property type="project" value="TreeGrafter"/>
</dbReference>
<dbReference type="CDD" id="cd00320">
    <property type="entry name" value="cpn10"/>
    <property type="match status" value="1"/>
</dbReference>
<dbReference type="FunFam" id="2.30.33.40:FF:000001">
    <property type="entry name" value="10 kDa chaperonin"/>
    <property type="match status" value="1"/>
</dbReference>
<dbReference type="Gene3D" id="2.30.33.40">
    <property type="entry name" value="GroES chaperonin"/>
    <property type="match status" value="1"/>
</dbReference>
<dbReference type="HAMAP" id="MF_00580">
    <property type="entry name" value="CH10"/>
    <property type="match status" value="1"/>
</dbReference>
<dbReference type="InterPro" id="IPR020818">
    <property type="entry name" value="Chaperonin_GroES"/>
</dbReference>
<dbReference type="InterPro" id="IPR037124">
    <property type="entry name" value="Chaperonin_GroES_sf"/>
</dbReference>
<dbReference type="InterPro" id="IPR018369">
    <property type="entry name" value="Chaprnonin_Cpn10_CS"/>
</dbReference>
<dbReference type="InterPro" id="IPR011032">
    <property type="entry name" value="GroES-like_sf"/>
</dbReference>
<dbReference type="NCBIfam" id="NF001531">
    <property type="entry name" value="PRK00364.2-2"/>
    <property type="match status" value="1"/>
</dbReference>
<dbReference type="NCBIfam" id="NF001533">
    <property type="entry name" value="PRK00364.2-4"/>
    <property type="match status" value="1"/>
</dbReference>
<dbReference type="NCBIfam" id="NF001534">
    <property type="entry name" value="PRK00364.2-5"/>
    <property type="match status" value="1"/>
</dbReference>
<dbReference type="PANTHER" id="PTHR10772">
    <property type="entry name" value="10 KDA HEAT SHOCK PROTEIN"/>
    <property type="match status" value="1"/>
</dbReference>
<dbReference type="PANTHER" id="PTHR10772:SF58">
    <property type="entry name" value="CO-CHAPERONIN GROES"/>
    <property type="match status" value="1"/>
</dbReference>
<dbReference type="Pfam" id="PF00166">
    <property type="entry name" value="Cpn10"/>
    <property type="match status" value="1"/>
</dbReference>
<dbReference type="PRINTS" id="PR00297">
    <property type="entry name" value="CHAPERONIN10"/>
</dbReference>
<dbReference type="SMART" id="SM00883">
    <property type="entry name" value="Cpn10"/>
    <property type="match status" value="1"/>
</dbReference>
<dbReference type="SUPFAM" id="SSF50129">
    <property type="entry name" value="GroES-like"/>
    <property type="match status" value="1"/>
</dbReference>
<dbReference type="PROSITE" id="PS00681">
    <property type="entry name" value="CHAPERONINS_CPN10"/>
    <property type="match status" value="1"/>
</dbReference>
<comment type="function">
    <text evidence="1">Together with the chaperonin GroEL, plays an essential role in assisting protein folding. The GroEL-GroES system forms a nano-cage that allows encapsulation of the non-native substrate proteins and provides a physical environment optimized to promote and accelerate protein folding. GroES binds to the apical surface of the GroEL ring, thereby capping the opening of the GroEL channel.</text>
</comment>
<comment type="subunit">
    <text evidence="1">Heptamer of 7 subunits arranged in a ring. Interacts with the chaperonin GroEL.</text>
</comment>
<comment type="subcellular location">
    <subcellularLocation>
        <location evidence="1">Cytoplasm</location>
    </subcellularLocation>
</comment>
<comment type="similarity">
    <text evidence="1">Belongs to the GroES chaperonin family.</text>
</comment>
<feature type="chain" id="PRO_1000025294" description="Co-chaperonin GroES">
    <location>
        <begin position="1"/>
        <end position="96"/>
    </location>
</feature>
<keyword id="KW-0143">Chaperone</keyword>
<keyword id="KW-0963">Cytoplasm</keyword>
<organism>
    <name type="scientific">Leptospira borgpetersenii serovar Hardjo-bovis (strain L550)</name>
    <dbReference type="NCBI Taxonomy" id="355276"/>
    <lineage>
        <taxon>Bacteria</taxon>
        <taxon>Pseudomonadati</taxon>
        <taxon>Spirochaetota</taxon>
        <taxon>Spirochaetia</taxon>
        <taxon>Leptospirales</taxon>
        <taxon>Leptospiraceae</taxon>
        <taxon>Leptospira</taxon>
    </lineage>
</organism>
<reference key="1">
    <citation type="journal article" date="2006" name="Proc. Natl. Acad. Sci. U.S.A.">
        <title>Genome reduction in Leptospira borgpetersenii reflects limited transmission potential.</title>
        <authorList>
            <person name="Bulach D.M."/>
            <person name="Zuerner R.L."/>
            <person name="Wilson P."/>
            <person name="Seemann T."/>
            <person name="McGrath A."/>
            <person name="Cullen P.A."/>
            <person name="Davis J."/>
            <person name="Johnson M."/>
            <person name="Kuczek E."/>
            <person name="Alt D.P."/>
            <person name="Peterson-Burch B."/>
            <person name="Coppel R.L."/>
            <person name="Rood J.I."/>
            <person name="Davies J.K."/>
            <person name="Adler B."/>
        </authorList>
    </citation>
    <scope>NUCLEOTIDE SEQUENCE [LARGE SCALE GENOMIC DNA]</scope>
    <source>
        <strain>L550</strain>
    </source>
</reference>
<name>CH10_LEPBL</name>
<gene>
    <name evidence="1" type="primary">groES</name>
    <name evidence="1" type="synonym">groS</name>
    <name type="ordered locus">LBL_1103</name>
</gene>
<accession>Q052X8</accession>
<protein>
    <recommendedName>
        <fullName evidence="1">Co-chaperonin GroES</fullName>
    </recommendedName>
    <alternativeName>
        <fullName evidence="1">10 kDa chaperonin</fullName>
    </alternativeName>
    <alternativeName>
        <fullName evidence="1">Chaperonin-10</fullName>
        <shortName evidence="1">Cpn10</shortName>
    </alternativeName>
</protein>
<evidence type="ECO:0000255" key="1">
    <source>
        <dbReference type="HAMAP-Rule" id="MF_00580"/>
    </source>
</evidence>
<proteinExistence type="inferred from homology"/>
<sequence>MASIKPLGDRVLVEPRQEAEEKIGSIFVPDTAKEKPQEGKVVEIGSGKYEDGKLVPLEVKVGDTVLYGKYSGTEIKSEGKEYLIIRESDILAVVKK</sequence>